<dbReference type="EC" id="3.5.3.1" evidence="1"/>
<dbReference type="EMBL" id="X15884">
    <property type="protein sequence ID" value="CAA33894.1"/>
    <property type="molecule type" value="Genomic_DNA"/>
</dbReference>
<dbReference type="EMBL" id="Z30316">
    <property type="protein sequence ID" value="CAA82964.1"/>
    <property type="molecule type" value="Genomic_DNA"/>
</dbReference>
<dbReference type="EMBL" id="AE007871">
    <property type="protein sequence ID" value="AAK90976.2"/>
    <property type="molecule type" value="Genomic_DNA"/>
</dbReference>
<dbReference type="PIR" id="AH3229">
    <property type="entry name" value="AH3229"/>
</dbReference>
<dbReference type="PIR" id="S06118">
    <property type="entry name" value="S06118"/>
</dbReference>
<dbReference type="RefSeq" id="NP_396535.2">
    <property type="nucleotide sequence ID" value="NC_003065.3"/>
</dbReference>
<dbReference type="RefSeq" id="WP_010891454.1">
    <property type="nucleotide sequence ID" value="NC_003065.3"/>
</dbReference>
<dbReference type="SMR" id="P14012"/>
<dbReference type="EnsemblBacteria" id="AAK90976">
    <property type="protein sequence ID" value="AAK90976"/>
    <property type="gene ID" value="Atu6018"/>
</dbReference>
<dbReference type="GeneID" id="1137341"/>
<dbReference type="KEGG" id="atu:Atu6018"/>
<dbReference type="PATRIC" id="fig|176299.10.peg.5225"/>
<dbReference type="HOGENOM" id="CLU_039478_6_2_5"/>
<dbReference type="OrthoDB" id="9788689at2"/>
<dbReference type="PhylomeDB" id="P14012"/>
<dbReference type="BioCyc" id="AGRO:ATU6018-MONOMER"/>
<dbReference type="BioCyc" id="MetaCyc:MONOMER-11552"/>
<dbReference type="UniPathway" id="UPA00158">
    <property type="reaction ID" value="UER00270"/>
</dbReference>
<dbReference type="Proteomes" id="UP000000813">
    <property type="component" value="Plasmid Ti"/>
</dbReference>
<dbReference type="GO" id="GO:0005737">
    <property type="term" value="C:cytoplasm"/>
    <property type="evidence" value="ECO:0007669"/>
    <property type="project" value="TreeGrafter"/>
</dbReference>
<dbReference type="GO" id="GO:0004053">
    <property type="term" value="F:arginase activity"/>
    <property type="evidence" value="ECO:0007669"/>
    <property type="project" value="UniProtKB-EC"/>
</dbReference>
<dbReference type="GO" id="GO:0030145">
    <property type="term" value="F:manganese ion binding"/>
    <property type="evidence" value="ECO:0007669"/>
    <property type="project" value="TreeGrafter"/>
</dbReference>
<dbReference type="GO" id="GO:0019547">
    <property type="term" value="P:arginine catabolic process to ornithine"/>
    <property type="evidence" value="ECO:0007669"/>
    <property type="project" value="TreeGrafter"/>
</dbReference>
<dbReference type="GO" id="GO:0000050">
    <property type="term" value="P:urea cycle"/>
    <property type="evidence" value="ECO:0007669"/>
    <property type="project" value="UniProtKB-UniPathway"/>
</dbReference>
<dbReference type="CDD" id="cd09989">
    <property type="entry name" value="Arginase"/>
    <property type="match status" value="1"/>
</dbReference>
<dbReference type="FunFam" id="3.40.800.10:FF:000012">
    <property type="entry name" value="Arginase"/>
    <property type="match status" value="1"/>
</dbReference>
<dbReference type="Gene3D" id="3.40.800.10">
    <property type="entry name" value="Ureohydrolase domain"/>
    <property type="match status" value="1"/>
</dbReference>
<dbReference type="InterPro" id="IPR014033">
    <property type="entry name" value="Arginase"/>
</dbReference>
<dbReference type="InterPro" id="IPR006035">
    <property type="entry name" value="Ureohydrolase"/>
</dbReference>
<dbReference type="InterPro" id="IPR023696">
    <property type="entry name" value="Ureohydrolase_dom_sf"/>
</dbReference>
<dbReference type="InterPro" id="IPR020855">
    <property type="entry name" value="Ureohydrolase_Mn_BS"/>
</dbReference>
<dbReference type="NCBIfam" id="TIGR01229">
    <property type="entry name" value="rocF_arginase"/>
    <property type="match status" value="1"/>
</dbReference>
<dbReference type="PANTHER" id="PTHR43782">
    <property type="entry name" value="ARGINASE"/>
    <property type="match status" value="1"/>
</dbReference>
<dbReference type="PANTHER" id="PTHR43782:SF3">
    <property type="entry name" value="ARGINASE"/>
    <property type="match status" value="1"/>
</dbReference>
<dbReference type="Pfam" id="PF00491">
    <property type="entry name" value="Arginase"/>
    <property type="match status" value="1"/>
</dbReference>
<dbReference type="PIRSF" id="PIRSF036979">
    <property type="entry name" value="Arginase"/>
    <property type="match status" value="1"/>
</dbReference>
<dbReference type="PRINTS" id="PR00116">
    <property type="entry name" value="ARGINASE"/>
</dbReference>
<dbReference type="SUPFAM" id="SSF52768">
    <property type="entry name" value="Arginase/deacetylase"/>
    <property type="match status" value="1"/>
</dbReference>
<dbReference type="PROSITE" id="PS01053">
    <property type="entry name" value="ARGINASE_1"/>
    <property type="match status" value="1"/>
</dbReference>
<dbReference type="PROSITE" id="PS51409">
    <property type="entry name" value="ARGINASE_2"/>
    <property type="match status" value="1"/>
</dbReference>
<evidence type="ECO:0000250" key="1">
    <source>
        <dbReference type="UniProtKB" id="P05089"/>
    </source>
</evidence>
<evidence type="ECO:0000250" key="2">
    <source>
        <dbReference type="UniProtKB" id="P53608"/>
    </source>
</evidence>
<evidence type="ECO:0000255" key="3">
    <source>
        <dbReference type="PROSITE-ProRule" id="PRU00742"/>
    </source>
</evidence>
<evidence type="ECO:0000305" key="4"/>
<name>ARGI_AGRFC</name>
<gene>
    <name type="primary">arcA</name>
    <name type="synonym">arc</name>
    <name type="ordered locus">Atu6018</name>
    <name type="ORF">AGR_pTi_56</name>
</gene>
<protein>
    <recommendedName>
        <fullName>Arginase</fullName>
        <ecNumber evidence="1">3.5.3.1</ecNumber>
    </recommendedName>
</protein>
<organism>
    <name type="scientific">Agrobacterium fabrum (strain C58 / ATCC 33970)</name>
    <name type="common">Agrobacterium tumefaciens (strain C58)</name>
    <dbReference type="NCBI Taxonomy" id="176299"/>
    <lineage>
        <taxon>Bacteria</taxon>
        <taxon>Pseudomonadati</taxon>
        <taxon>Pseudomonadota</taxon>
        <taxon>Alphaproteobacteria</taxon>
        <taxon>Hyphomicrobiales</taxon>
        <taxon>Rhizobiaceae</taxon>
        <taxon>Rhizobium/Agrobacterium group</taxon>
        <taxon>Agrobacterium</taxon>
        <taxon>Agrobacterium tumefaciens complex</taxon>
    </lineage>
</organism>
<accession>P14012</accession>
<feature type="chain" id="PRO_0000173712" description="Arginase">
    <location>
        <begin position="1"/>
        <end position="324"/>
    </location>
</feature>
<feature type="binding site" evidence="3">
    <location>
        <position position="115"/>
    </location>
    <ligand>
        <name>Mn(2+)</name>
        <dbReference type="ChEBI" id="CHEBI:29035"/>
        <label>1</label>
    </ligand>
</feature>
<feature type="binding site" evidence="3">
    <location>
        <position position="142"/>
    </location>
    <ligand>
        <name>Mn(2+)</name>
        <dbReference type="ChEBI" id="CHEBI:29035"/>
        <label>1</label>
    </ligand>
</feature>
<feature type="binding site" evidence="3">
    <location>
        <position position="142"/>
    </location>
    <ligand>
        <name>Mn(2+)</name>
        <dbReference type="ChEBI" id="CHEBI:29035"/>
        <label>2</label>
    </ligand>
</feature>
<feature type="binding site" evidence="2">
    <location>
        <begin position="144"/>
        <end position="148"/>
    </location>
    <ligand>
        <name>substrate</name>
    </ligand>
</feature>
<feature type="binding site" evidence="3">
    <location>
        <position position="144"/>
    </location>
    <ligand>
        <name>Mn(2+)</name>
        <dbReference type="ChEBI" id="CHEBI:29035"/>
        <label>2</label>
    </ligand>
</feature>
<feature type="binding site" evidence="3">
    <location>
        <position position="146"/>
    </location>
    <ligand>
        <name>Mn(2+)</name>
        <dbReference type="ChEBI" id="CHEBI:29035"/>
        <label>1</label>
    </ligand>
</feature>
<feature type="binding site" evidence="2">
    <location>
        <begin position="155"/>
        <end position="157"/>
    </location>
    <ligand>
        <name>substrate</name>
    </ligand>
</feature>
<feature type="binding site" evidence="2">
    <location>
        <position position="196"/>
    </location>
    <ligand>
        <name>substrate</name>
    </ligand>
</feature>
<feature type="binding site" evidence="3">
    <location>
        <position position="244"/>
    </location>
    <ligand>
        <name>Mn(2+)</name>
        <dbReference type="ChEBI" id="CHEBI:29035"/>
        <label>1</label>
    </ligand>
</feature>
<feature type="binding site" evidence="3">
    <location>
        <position position="244"/>
    </location>
    <ligand>
        <name>Mn(2+)</name>
        <dbReference type="ChEBI" id="CHEBI:29035"/>
        <label>2</label>
    </ligand>
</feature>
<feature type="binding site" evidence="3">
    <location>
        <position position="246"/>
    </location>
    <ligand>
        <name>Mn(2+)</name>
        <dbReference type="ChEBI" id="CHEBI:29035"/>
        <label>2</label>
    </ligand>
</feature>
<feature type="binding site" evidence="2">
    <location>
        <position position="258"/>
    </location>
    <ligand>
        <name>substrate</name>
    </ligand>
</feature>
<feature type="binding site" evidence="2">
    <location>
        <position position="289"/>
    </location>
    <ligand>
        <name>substrate</name>
    </ligand>
</feature>
<geneLocation type="plasmid">
    <name>pTiC58</name>
</geneLocation>
<keyword id="KW-0056">Arginine metabolism</keyword>
<keyword id="KW-0378">Hydrolase</keyword>
<keyword id="KW-0464">Manganese</keyword>
<keyword id="KW-0479">Metal-binding</keyword>
<keyword id="KW-0614">Plasmid</keyword>
<keyword id="KW-1185">Reference proteome</keyword>
<sequence length="324" mass="34695">MNGAGEINASRHRKENELKTCQILGAPVQSGASQPGCLMGPDAFRTAGLTQVLTELGWAVTDLGDATPTVEPELSHPNSAVKNLDALVGWTRSLSQKALEMARSCDLPVFLGGDHSMSAGTVSGVAQRTAELGKEQFVLWLDAHTDLHTLHTTASGNLHGTPVAYYTGQSGFEGLPPLAAPVNPRNVSMMGIRSVDPEERRRVAEIGVQVADMRVLDEQGVVRPLEAFLDRVSKVSGRLHVSLDVDFLDPAIAPAVGTTVPGGATFREAHLIMEMLHDSGLVTSLDLAELNPFLDERGRTARLITDLASSLFGRRVFDRVTTAF</sequence>
<reference key="1">
    <citation type="journal article" date="1989" name="Eur. J. Biochem.">
        <title>Arginase of Agrobacterium Ti plasmid C58. DNA sequence, properties, and comparison with eucaryotic enzymes.</title>
        <authorList>
            <person name="Schrell A."/>
            <person name="Alt-Moerbe J."/>
            <person name="Lanz T."/>
            <person name="Schroeder J."/>
        </authorList>
    </citation>
    <scope>NUCLEOTIDE SEQUENCE [GENOMIC DNA]</scope>
</reference>
<reference key="2">
    <citation type="journal article" date="1987" name="Eur. J. Biochem.">
        <title>The Noc region of Ti plasmid C58 codes for arginase and ornithine cyclodeaminase.</title>
        <authorList>
            <person name="Sans N."/>
            <person name="Schroeder G."/>
            <person name="Schroeder J."/>
        </authorList>
    </citation>
    <scope>NUCLEOTIDE SEQUENCE [GENOMIC DNA]</scope>
</reference>
<reference key="3">
    <citation type="journal article" date="2001" name="Science">
        <title>The genome of the natural genetic engineer Agrobacterium tumefaciens C58.</title>
        <authorList>
            <person name="Wood D.W."/>
            <person name="Setubal J.C."/>
            <person name="Kaul R."/>
            <person name="Monks D.E."/>
            <person name="Kitajima J.P."/>
            <person name="Okura V.K."/>
            <person name="Zhou Y."/>
            <person name="Chen L."/>
            <person name="Wood G.E."/>
            <person name="Almeida N.F. Jr."/>
            <person name="Woo L."/>
            <person name="Chen Y."/>
            <person name="Paulsen I.T."/>
            <person name="Eisen J.A."/>
            <person name="Karp P.D."/>
            <person name="Bovee D. Sr."/>
            <person name="Chapman P."/>
            <person name="Clendenning J."/>
            <person name="Deatherage G."/>
            <person name="Gillet W."/>
            <person name="Grant C."/>
            <person name="Kutyavin T."/>
            <person name="Levy R."/>
            <person name="Li M.-J."/>
            <person name="McClelland E."/>
            <person name="Palmieri A."/>
            <person name="Raymond C."/>
            <person name="Rouse G."/>
            <person name="Saenphimmachak C."/>
            <person name="Wu Z."/>
            <person name="Romero P."/>
            <person name="Gordon D."/>
            <person name="Zhang S."/>
            <person name="Yoo H."/>
            <person name="Tao Y."/>
            <person name="Biddle P."/>
            <person name="Jung M."/>
            <person name="Krespan W."/>
            <person name="Perry M."/>
            <person name="Gordon-Kamm B."/>
            <person name="Liao L."/>
            <person name="Kim S."/>
            <person name="Hendrick C."/>
            <person name="Zhao Z.-Y."/>
            <person name="Dolan M."/>
            <person name="Chumley F."/>
            <person name="Tingey S.V."/>
            <person name="Tomb J.-F."/>
            <person name="Gordon M.P."/>
            <person name="Olson M.V."/>
            <person name="Nester E.W."/>
        </authorList>
    </citation>
    <scope>NUCLEOTIDE SEQUENCE [LARGE SCALE GENOMIC DNA]</scope>
</reference>
<reference key="4">
    <citation type="journal article" date="2001" name="Science">
        <title>Genome sequence of the plant pathogen and biotechnology agent Agrobacterium tumefaciens C58.</title>
        <authorList>
            <person name="Goodner B."/>
            <person name="Hinkle G."/>
            <person name="Gattung S."/>
            <person name="Miller N."/>
            <person name="Blanchard M."/>
            <person name="Qurollo B."/>
            <person name="Goldman B.S."/>
            <person name="Cao Y."/>
            <person name="Askenazi M."/>
            <person name="Halling C."/>
            <person name="Mullin L."/>
            <person name="Houmiel K."/>
            <person name="Gordon J."/>
            <person name="Vaudin M."/>
            <person name="Iartchouk O."/>
            <person name="Epp A."/>
            <person name="Liu F."/>
            <person name="Wollam C."/>
            <person name="Allinger M."/>
            <person name="Doughty D."/>
            <person name="Scott C."/>
            <person name="Lappas C."/>
            <person name="Markelz B."/>
            <person name="Flanagan C."/>
            <person name="Crowell C."/>
            <person name="Gurson J."/>
            <person name="Lomo C."/>
            <person name="Sear C."/>
            <person name="Strub G."/>
            <person name="Cielo C."/>
            <person name="Slater S."/>
        </authorList>
    </citation>
    <scope>NUCLEOTIDE SEQUENCE [LARGE SCALE GENOMIC DNA]</scope>
    <source>
        <strain>C58 / ATCC 33970</strain>
    </source>
</reference>
<proteinExistence type="evidence at transcript level"/>
<comment type="catalytic activity">
    <reaction evidence="1">
        <text>L-arginine + H2O = urea + L-ornithine</text>
        <dbReference type="Rhea" id="RHEA:20569"/>
        <dbReference type="ChEBI" id="CHEBI:15377"/>
        <dbReference type="ChEBI" id="CHEBI:16199"/>
        <dbReference type="ChEBI" id="CHEBI:32682"/>
        <dbReference type="ChEBI" id="CHEBI:46911"/>
        <dbReference type="EC" id="3.5.3.1"/>
    </reaction>
</comment>
<comment type="cofactor">
    <cofactor evidence="3">
        <name>Mn(2+)</name>
        <dbReference type="ChEBI" id="CHEBI:29035"/>
    </cofactor>
    <text evidence="3">Binds 2 manganese ions per subunit.</text>
</comment>
<comment type="pathway">
    <text evidence="1">Nitrogen metabolism; urea cycle; L-ornithine and urea from L-arginine: step 1/1.</text>
</comment>
<comment type="subunit">
    <text evidence="4">Homohexamer.</text>
</comment>
<comment type="induction">
    <text>By nopaline. But not by L-arginine or L-ornithine.</text>
</comment>
<comment type="similarity">
    <text evidence="3">Belongs to the arginase family.</text>
</comment>